<proteinExistence type="inferred from homology"/>
<accession>Q6D2N9</accession>
<protein>
    <recommendedName>
        <fullName evidence="1">Acetyl-coenzyme A carboxylase carboxyl transferase subunit beta</fullName>
        <shortName evidence="1">ACCase subunit beta</shortName>
        <shortName evidence="1">Acetyl-CoA carboxylase carboxyltransferase subunit beta</shortName>
        <ecNumber evidence="1">2.1.3.15</ecNumber>
    </recommendedName>
</protein>
<organism>
    <name type="scientific">Pectobacterium atrosepticum (strain SCRI 1043 / ATCC BAA-672)</name>
    <name type="common">Erwinia carotovora subsp. atroseptica</name>
    <dbReference type="NCBI Taxonomy" id="218491"/>
    <lineage>
        <taxon>Bacteria</taxon>
        <taxon>Pseudomonadati</taxon>
        <taxon>Pseudomonadota</taxon>
        <taxon>Gammaproteobacteria</taxon>
        <taxon>Enterobacterales</taxon>
        <taxon>Pectobacteriaceae</taxon>
        <taxon>Pectobacterium</taxon>
    </lineage>
</organism>
<gene>
    <name evidence="1" type="primary">accD</name>
    <name type="ordered locus">ECA3056</name>
</gene>
<name>ACCD_PECAS</name>
<keyword id="KW-0067">ATP-binding</keyword>
<keyword id="KW-0963">Cytoplasm</keyword>
<keyword id="KW-0275">Fatty acid biosynthesis</keyword>
<keyword id="KW-0276">Fatty acid metabolism</keyword>
<keyword id="KW-0444">Lipid biosynthesis</keyword>
<keyword id="KW-0443">Lipid metabolism</keyword>
<keyword id="KW-0479">Metal-binding</keyword>
<keyword id="KW-0547">Nucleotide-binding</keyword>
<keyword id="KW-1185">Reference proteome</keyword>
<keyword id="KW-0808">Transferase</keyword>
<keyword id="KW-0862">Zinc</keyword>
<keyword id="KW-0863">Zinc-finger</keyword>
<reference key="1">
    <citation type="journal article" date="2004" name="Proc. Natl. Acad. Sci. U.S.A.">
        <title>Genome sequence of the enterobacterial phytopathogen Erwinia carotovora subsp. atroseptica and characterization of virulence factors.</title>
        <authorList>
            <person name="Bell K.S."/>
            <person name="Sebaihia M."/>
            <person name="Pritchard L."/>
            <person name="Holden M.T.G."/>
            <person name="Hyman L.J."/>
            <person name="Holeva M.C."/>
            <person name="Thomson N.R."/>
            <person name="Bentley S.D."/>
            <person name="Churcher L.J.C."/>
            <person name="Mungall K."/>
            <person name="Atkin R."/>
            <person name="Bason N."/>
            <person name="Brooks K."/>
            <person name="Chillingworth T."/>
            <person name="Clark K."/>
            <person name="Doggett J."/>
            <person name="Fraser A."/>
            <person name="Hance Z."/>
            <person name="Hauser H."/>
            <person name="Jagels K."/>
            <person name="Moule S."/>
            <person name="Norbertczak H."/>
            <person name="Ormond D."/>
            <person name="Price C."/>
            <person name="Quail M.A."/>
            <person name="Sanders M."/>
            <person name="Walker D."/>
            <person name="Whitehead S."/>
            <person name="Salmond G.P.C."/>
            <person name="Birch P.R.J."/>
            <person name="Parkhill J."/>
            <person name="Toth I.K."/>
        </authorList>
    </citation>
    <scope>NUCLEOTIDE SEQUENCE [LARGE SCALE GENOMIC DNA]</scope>
    <source>
        <strain>SCRI 1043 / ATCC BAA-672</strain>
    </source>
</reference>
<sequence length="305" mass="33591">MSWIERILNKSNITPTRKANIPEGVWTKCDSCGQVLYRAELERNLGVCPKCDHHMRLSARARLQAFLDKENTVELGSELEPKDVLKFRDSKKYKDRLVSAQKQSDEKDAMVVMKGTLYGMPIVVASFEFAFMGGSMASVVGARFVRAVEQALEDGCPLVCFSASGGARMQEALMSLMQMAKTSAALAKMRERGLPYISVLTDPTMGGVSASLAMLGDLNIAEPKALIGFAGPRVIEQTVREKLPPGFQRSEFLIEKGAIDMIVRRPEMRYKVATLLAKLTNHPEPGNDDVEIRSDAPSESSQDDA</sequence>
<evidence type="ECO:0000255" key="1">
    <source>
        <dbReference type="HAMAP-Rule" id="MF_01395"/>
    </source>
</evidence>
<evidence type="ECO:0000255" key="2">
    <source>
        <dbReference type="PROSITE-ProRule" id="PRU01136"/>
    </source>
</evidence>
<evidence type="ECO:0000256" key="3">
    <source>
        <dbReference type="SAM" id="MobiDB-lite"/>
    </source>
</evidence>
<feature type="chain" id="PRO_0000358983" description="Acetyl-coenzyme A carboxylase carboxyl transferase subunit beta">
    <location>
        <begin position="1"/>
        <end position="305"/>
    </location>
</feature>
<feature type="domain" description="CoA carboxyltransferase N-terminal" evidence="2">
    <location>
        <begin position="25"/>
        <end position="294"/>
    </location>
</feature>
<feature type="zinc finger region" description="C4-type" evidence="1">
    <location>
        <begin position="29"/>
        <end position="51"/>
    </location>
</feature>
<feature type="region of interest" description="Disordered" evidence="3">
    <location>
        <begin position="281"/>
        <end position="305"/>
    </location>
</feature>
<feature type="binding site" evidence="1">
    <location>
        <position position="29"/>
    </location>
    <ligand>
        <name>Zn(2+)</name>
        <dbReference type="ChEBI" id="CHEBI:29105"/>
    </ligand>
</feature>
<feature type="binding site" evidence="1">
    <location>
        <position position="32"/>
    </location>
    <ligand>
        <name>Zn(2+)</name>
        <dbReference type="ChEBI" id="CHEBI:29105"/>
    </ligand>
</feature>
<feature type="binding site" evidence="1">
    <location>
        <position position="48"/>
    </location>
    <ligand>
        <name>Zn(2+)</name>
        <dbReference type="ChEBI" id="CHEBI:29105"/>
    </ligand>
</feature>
<feature type="binding site" evidence="1">
    <location>
        <position position="51"/>
    </location>
    <ligand>
        <name>Zn(2+)</name>
        <dbReference type="ChEBI" id="CHEBI:29105"/>
    </ligand>
</feature>
<comment type="function">
    <text evidence="1">Component of the acetyl coenzyme A carboxylase (ACC) complex. Biotin carboxylase (BC) catalyzes the carboxylation of biotin on its carrier protein (BCCP) and then the CO(2) group is transferred by the transcarboxylase to acetyl-CoA to form malonyl-CoA.</text>
</comment>
<comment type="catalytic activity">
    <reaction evidence="1">
        <text>N(6)-carboxybiotinyl-L-lysyl-[protein] + acetyl-CoA = N(6)-biotinyl-L-lysyl-[protein] + malonyl-CoA</text>
        <dbReference type="Rhea" id="RHEA:54728"/>
        <dbReference type="Rhea" id="RHEA-COMP:10505"/>
        <dbReference type="Rhea" id="RHEA-COMP:10506"/>
        <dbReference type="ChEBI" id="CHEBI:57288"/>
        <dbReference type="ChEBI" id="CHEBI:57384"/>
        <dbReference type="ChEBI" id="CHEBI:83144"/>
        <dbReference type="ChEBI" id="CHEBI:83145"/>
        <dbReference type="EC" id="2.1.3.15"/>
    </reaction>
</comment>
<comment type="cofactor">
    <cofactor evidence="1">
        <name>Zn(2+)</name>
        <dbReference type="ChEBI" id="CHEBI:29105"/>
    </cofactor>
    <text evidence="1">Binds 1 zinc ion per subunit.</text>
</comment>
<comment type="pathway">
    <text evidence="1">Lipid metabolism; malonyl-CoA biosynthesis; malonyl-CoA from acetyl-CoA: step 1/1.</text>
</comment>
<comment type="subunit">
    <text evidence="1">Acetyl-CoA carboxylase is a heterohexamer composed of biotin carboxyl carrier protein (AccB), biotin carboxylase (AccC) and two subunits each of ACCase subunit alpha (AccA) and ACCase subunit beta (AccD).</text>
</comment>
<comment type="subcellular location">
    <subcellularLocation>
        <location evidence="1">Cytoplasm</location>
    </subcellularLocation>
</comment>
<comment type="similarity">
    <text evidence="1">Belongs to the AccD/PCCB family.</text>
</comment>
<dbReference type="EC" id="2.1.3.15" evidence="1"/>
<dbReference type="EMBL" id="BX950851">
    <property type="protein sequence ID" value="CAG75955.1"/>
    <property type="molecule type" value="Genomic_DNA"/>
</dbReference>
<dbReference type="RefSeq" id="WP_011094580.1">
    <property type="nucleotide sequence ID" value="NC_004547.2"/>
</dbReference>
<dbReference type="SMR" id="Q6D2N9"/>
<dbReference type="STRING" id="218491.ECA3056"/>
<dbReference type="GeneID" id="57209740"/>
<dbReference type="KEGG" id="eca:ECA3056"/>
<dbReference type="PATRIC" id="fig|218491.5.peg.3089"/>
<dbReference type="eggNOG" id="COG0777">
    <property type="taxonomic scope" value="Bacteria"/>
</dbReference>
<dbReference type="HOGENOM" id="CLU_015486_1_0_6"/>
<dbReference type="OrthoDB" id="9772975at2"/>
<dbReference type="UniPathway" id="UPA00655">
    <property type="reaction ID" value="UER00711"/>
</dbReference>
<dbReference type="Proteomes" id="UP000007966">
    <property type="component" value="Chromosome"/>
</dbReference>
<dbReference type="GO" id="GO:0009329">
    <property type="term" value="C:acetate CoA-transferase complex"/>
    <property type="evidence" value="ECO:0007669"/>
    <property type="project" value="TreeGrafter"/>
</dbReference>
<dbReference type="GO" id="GO:0003989">
    <property type="term" value="F:acetyl-CoA carboxylase activity"/>
    <property type="evidence" value="ECO:0007669"/>
    <property type="project" value="InterPro"/>
</dbReference>
<dbReference type="GO" id="GO:0005524">
    <property type="term" value="F:ATP binding"/>
    <property type="evidence" value="ECO:0007669"/>
    <property type="project" value="UniProtKB-KW"/>
</dbReference>
<dbReference type="GO" id="GO:0016743">
    <property type="term" value="F:carboxyl- or carbamoyltransferase activity"/>
    <property type="evidence" value="ECO:0007669"/>
    <property type="project" value="UniProtKB-UniRule"/>
</dbReference>
<dbReference type="GO" id="GO:0008270">
    <property type="term" value="F:zinc ion binding"/>
    <property type="evidence" value="ECO:0007669"/>
    <property type="project" value="UniProtKB-UniRule"/>
</dbReference>
<dbReference type="GO" id="GO:0006633">
    <property type="term" value="P:fatty acid biosynthetic process"/>
    <property type="evidence" value="ECO:0007669"/>
    <property type="project" value="UniProtKB-KW"/>
</dbReference>
<dbReference type="GO" id="GO:2001295">
    <property type="term" value="P:malonyl-CoA biosynthetic process"/>
    <property type="evidence" value="ECO:0007669"/>
    <property type="project" value="UniProtKB-UniRule"/>
</dbReference>
<dbReference type="FunFam" id="3.90.226.10:FF:000013">
    <property type="entry name" value="Acetyl-coenzyme A carboxylase carboxyl transferase subunit beta"/>
    <property type="match status" value="1"/>
</dbReference>
<dbReference type="Gene3D" id="3.90.226.10">
    <property type="entry name" value="2-enoyl-CoA Hydratase, Chain A, domain 1"/>
    <property type="match status" value="1"/>
</dbReference>
<dbReference type="HAMAP" id="MF_01395">
    <property type="entry name" value="AcetylCoA_CT_beta"/>
    <property type="match status" value="1"/>
</dbReference>
<dbReference type="InterPro" id="IPR034733">
    <property type="entry name" value="AcCoA_carboxyl_beta"/>
</dbReference>
<dbReference type="InterPro" id="IPR000438">
    <property type="entry name" value="Acetyl_CoA_COase_Trfase_b_su"/>
</dbReference>
<dbReference type="InterPro" id="IPR029045">
    <property type="entry name" value="ClpP/crotonase-like_dom_sf"/>
</dbReference>
<dbReference type="InterPro" id="IPR011762">
    <property type="entry name" value="COA_CT_N"/>
</dbReference>
<dbReference type="InterPro" id="IPR041010">
    <property type="entry name" value="Znf-ACC"/>
</dbReference>
<dbReference type="NCBIfam" id="TIGR00515">
    <property type="entry name" value="accD"/>
    <property type="match status" value="1"/>
</dbReference>
<dbReference type="PANTHER" id="PTHR42995">
    <property type="entry name" value="ACETYL-COENZYME A CARBOXYLASE CARBOXYL TRANSFERASE SUBUNIT BETA, CHLOROPLASTIC"/>
    <property type="match status" value="1"/>
</dbReference>
<dbReference type="PANTHER" id="PTHR42995:SF5">
    <property type="entry name" value="ACETYL-COENZYME A CARBOXYLASE CARBOXYL TRANSFERASE SUBUNIT BETA, CHLOROPLASTIC"/>
    <property type="match status" value="1"/>
</dbReference>
<dbReference type="Pfam" id="PF01039">
    <property type="entry name" value="Carboxyl_trans"/>
    <property type="match status" value="1"/>
</dbReference>
<dbReference type="Pfam" id="PF17848">
    <property type="entry name" value="Zn_ribbon_ACC"/>
    <property type="match status" value="1"/>
</dbReference>
<dbReference type="PRINTS" id="PR01070">
    <property type="entry name" value="ACCCTRFRASEB"/>
</dbReference>
<dbReference type="SUPFAM" id="SSF52096">
    <property type="entry name" value="ClpP/crotonase"/>
    <property type="match status" value="1"/>
</dbReference>
<dbReference type="PROSITE" id="PS50980">
    <property type="entry name" value="COA_CT_NTER"/>
    <property type="match status" value="1"/>
</dbReference>